<comment type="similarity">
    <text evidence="2">Belongs to the eukaryotic ribosomal protein eL18 family.</text>
</comment>
<name>RL18_CICAR</name>
<organism>
    <name type="scientific">Cicer arietinum</name>
    <name type="common">Chickpea</name>
    <name type="synonym">Garbanzo</name>
    <dbReference type="NCBI Taxonomy" id="3827"/>
    <lineage>
        <taxon>Eukaryota</taxon>
        <taxon>Viridiplantae</taxon>
        <taxon>Streptophyta</taxon>
        <taxon>Embryophyta</taxon>
        <taxon>Tracheophyta</taxon>
        <taxon>Spermatophyta</taxon>
        <taxon>Magnoliopsida</taxon>
        <taxon>eudicotyledons</taxon>
        <taxon>Gunneridae</taxon>
        <taxon>Pentapetalae</taxon>
        <taxon>rosids</taxon>
        <taxon>fabids</taxon>
        <taxon>Fabales</taxon>
        <taxon>Fabaceae</taxon>
        <taxon>Papilionoideae</taxon>
        <taxon>50 kb inversion clade</taxon>
        <taxon>NPAAA clade</taxon>
        <taxon>Hologalegina</taxon>
        <taxon>IRL clade</taxon>
        <taxon>Cicereae</taxon>
        <taxon>Cicer</taxon>
    </lineage>
</organism>
<feature type="chain" id="PRO_0000132781" description="Large ribosomal subunit protein eL18">
    <location>
        <begin position="1" status="less than"/>
        <end position="183"/>
    </location>
</feature>
<feature type="region of interest" description="Disordered" evidence="1">
    <location>
        <begin position="146"/>
        <end position="183"/>
    </location>
</feature>
<feature type="compositionally biased region" description="Basic residues" evidence="1">
    <location>
        <begin position="156"/>
        <end position="166"/>
    </location>
</feature>
<feature type="compositionally biased region" description="Basic residues" evidence="1">
    <location>
        <begin position="173"/>
        <end position="183"/>
    </location>
</feature>
<feature type="non-terminal residue">
    <location>
        <position position="1"/>
    </location>
</feature>
<evidence type="ECO:0000256" key="1">
    <source>
        <dbReference type="SAM" id="MobiDB-lite"/>
    </source>
</evidence>
<evidence type="ECO:0000305" key="2"/>
<dbReference type="EMBL" id="AJ004961">
    <property type="protein sequence ID" value="CAA06246.1"/>
    <property type="molecule type" value="mRNA"/>
</dbReference>
<dbReference type="SMR" id="O65729"/>
<dbReference type="STRING" id="3827.O65729"/>
<dbReference type="PaxDb" id="3827-XP_004494578.1"/>
<dbReference type="eggNOG" id="KOG1714">
    <property type="taxonomic scope" value="Eukaryota"/>
</dbReference>
<dbReference type="Proteomes" id="UP000087171">
    <property type="component" value="Unplaced"/>
</dbReference>
<dbReference type="GO" id="GO:0022625">
    <property type="term" value="C:cytosolic large ribosomal subunit"/>
    <property type="evidence" value="ECO:0007669"/>
    <property type="project" value="TreeGrafter"/>
</dbReference>
<dbReference type="GO" id="GO:0003729">
    <property type="term" value="F:mRNA binding"/>
    <property type="evidence" value="ECO:0007669"/>
    <property type="project" value="UniProtKB-ARBA"/>
</dbReference>
<dbReference type="GO" id="GO:0003735">
    <property type="term" value="F:structural constituent of ribosome"/>
    <property type="evidence" value="ECO:0007669"/>
    <property type="project" value="InterPro"/>
</dbReference>
<dbReference type="GO" id="GO:0006412">
    <property type="term" value="P:translation"/>
    <property type="evidence" value="ECO:0007669"/>
    <property type="project" value="InterPro"/>
</dbReference>
<dbReference type="FunFam" id="3.100.10.10:FF:000001">
    <property type="entry name" value="60S ribosomal protein L18"/>
    <property type="match status" value="1"/>
</dbReference>
<dbReference type="Gene3D" id="3.100.10.10">
    <property type="match status" value="1"/>
</dbReference>
<dbReference type="InterPro" id="IPR000039">
    <property type="entry name" value="Ribosomal_eL18"/>
</dbReference>
<dbReference type="InterPro" id="IPR021132">
    <property type="entry name" value="Ribosomal_eL18/eL18-A/B/_CS"/>
</dbReference>
<dbReference type="InterPro" id="IPR021131">
    <property type="entry name" value="Ribosomal_uL15/eL18"/>
</dbReference>
<dbReference type="InterPro" id="IPR036227">
    <property type="entry name" value="Ribosomal_uL15/eL18_sf"/>
</dbReference>
<dbReference type="PANTHER" id="PTHR10934">
    <property type="entry name" value="60S RIBOSOMAL PROTEIN L18"/>
    <property type="match status" value="1"/>
</dbReference>
<dbReference type="PANTHER" id="PTHR10934:SF24">
    <property type="entry name" value="60S RIBOSOMAL PROTEIN L18"/>
    <property type="match status" value="1"/>
</dbReference>
<dbReference type="Pfam" id="PF17135">
    <property type="entry name" value="Ribosomal_L18"/>
    <property type="match status" value="1"/>
</dbReference>
<dbReference type="SUPFAM" id="SSF52080">
    <property type="entry name" value="Ribosomal proteins L15p and L18e"/>
    <property type="match status" value="1"/>
</dbReference>
<dbReference type="PROSITE" id="PS01106">
    <property type="entry name" value="RIBOSOMAL_L18E"/>
    <property type="match status" value="1"/>
</dbReference>
<reference key="1">
    <citation type="submission" date="1998-03" db="EMBL/GenBank/DDBJ databases">
        <authorList>
            <person name="Dopico B."/>
            <person name="Munoz F.J."/>
            <person name="Labrador E."/>
        </authorList>
    </citation>
    <scope>NUCLEOTIDE SEQUENCE [MRNA]</scope>
    <source>
        <strain>cv. Castellana</strain>
        <tissue>Etiolated epicotyl</tissue>
    </source>
</reference>
<sequence>DLKAGGKNKKTKRTSPKSNDIYLKLLVKLYRFLVRRTDSNFNAVILKRLFMSKVNRPPLSLSRLIKYMQGKEGKIGVVVGAVTDDIRVYDVPTIKVTALKFTETARARIQKAGGECLTFDQLALRLPLTDTVLLRGPKNAREAVKHFGPAPGVPHSHTKPYVRSKGRKFEKARGRRKSRGFRV</sequence>
<keyword id="KW-1185">Reference proteome</keyword>
<keyword id="KW-0687">Ribonucleoprotein</keyword>
<keyword id="KW-0689">Ribosomal protein</keyword>
<accession>O65729</accession>
<protein>
    <recommendedName>
        <fullName evidence="2">Large ribosomal subunit protein eL18</fullName>
    </recommendedName>
    <alternativeName>
        <fullName>60S ribosomal protein L18</fullName>
    </alternativeName>
</protein>
<proteinExistence type="evidence at transcript level"/>
<gene>
    <name type="primary">RPL18</name>
</gene>